<protein>
    <recommendedName>
        <fullName evidence="1">UPF0262 protein Mmar10_1128</fullName>
    </recommendedName>
</protein>
<organism>
    <name type="scientific">Maricaulis maris (strain MCS10)</name>
    <name type="common">Caulobacter maris</name>
    <dbReference type="NCBI Taxonomy" id="394221"/>
    <lineage>
        <taxon>Bacteria</taxon>
        <taxon>Pseudomonadati</taxon>
        <taxon>Pseudomonadota</taxon>
        <taxon>Alphaproteobacteria</taxon>
        <taxon>Maricaulales</taxon>
        <taxon>Maricaulaceae</taxon>
        <taxon>Maricaulis</taxon>
    </lineage>
</organism>
<proteinExistence type="inferred from homology"/>
<evidence type="ECO:0000255" key="1">
    <source>
        <dbReference type="HAMAP-Rule" id="MF_00678"/>
    </source>
</evidence>
<gene>
    <name type="ordered locus">Mmar10_1128</name>
</gene>
<comment type="similarity">
    <text evidence="1">Belongs to the UPF0262 family.</text>
</comment>
<keyword id="KW-1185">Reference proteome</keyword>
<feature type="chain" id="PRO_0000314198" description="UPF0262 protein Mmar10_1128">
    <location>
        <begin position="1"/>
        <end position="160"/>
    </location>
</feature>
<sequence length="160" mass="18180">MSQSDDRIVRIDLDGASMGPGDVNADHERRVAIADLLEGNRFRPDGEVDGPYALRLAIEHDRLVFDVRLEDDTPVHGFMFALGPLRRIVKDYFLICESYYEAVRDAPLERIEAIDMARRGVHNEGSTLLRERLVGKIDVDFDTARRLFTLICALHRRAAS</sequence>
<accession>Q0AQL6</accession>
<reference key="1">
    <citation type="submission" date="2006-08" db="EMBL/GenBank/DDBJ databases">
        <title>Complete sequence of Maricaulis maris MCS10.</title>
        <authorList>
            <consortium name="US DOE Joint Genome Institute"/>
            <person name="Copeland A."/>
            <person name="Lucas S."/>
            <person name="Lapidus A."/>
            <person name="Barry K."/>
            <person name="Detter J.C."/>
            <person name="Glavina del Rio T."/>
            <person name="Hammon N."/>
            <person name="Israni S."/>
            <person name="Dalin E."/>
            <person name="Tice H."/>
            <person name="Pitluck S."/>
            <person name="Saunders E."/>
            <person name="Brettin T."/>
            <person name="Bruce D."/>
            <person name="Han C."/>
            <person name="Tapia R."/>
            <person name="Gilna P."/>
            <person name="Schmutz J."/>
            <person name="Larimer F."/>
            <person name="Land M."/>
            <person name="Hauser L."/>
            <person name="Kyrpides N."/>
            <person name="Mikhailova N."/>
            <person name="Viollier P."/>
            <person name="Stephens C."/>
            <person name="Richardson P."/>
        </authorList>
    </citation>
    <scope>NUCLEOTIDE SEQUENCE [LARGE SCALE GENOMIC DNA]</scope>
    <source>
        <strain>MCS10</strain>
    </source>
</reference>
<name>Y1128_MARMM</name>
<dbReference type="EMBL" id="CP000449">
    <property type="protein sequence ID" value="ABI65421.1"/>
    <property type="molecule type" value="Genomic_DNA"/>
</dbReference>
<dbReference type="RefSeq" id="WP_011643068.1">
    <property type="nucleotide sequence ID" value="NC_008347.1"/>
</dbReference>
<dbReference type="STRING" id="394221.Mmar10_1128"/>
<dbReference type="KEGG" id="mmr:Mmar10_1128"/>
<dbReference type="eggNOG" id="COG5328">
    <property type="taxonomic scope" value="Bacteria"/>
</dbReference>
<dbReference type="HOGENOM" id="CLU_112904_0_0_5"/>
<dbReference type="OrthoDB" id="9798434at2"/>
<dbReference type="Proteomes" id="UP000001964">
    <property type="component" value="Chromosome"/>
</dbReference>
<dbReference type="HAMAP" id="MF_00678">
    <property type="entry name" value="UPF0262"/>
    <property type="match status" value="1"/>
</dbReference>
<dbReference type="InterPro" id="IPR008321">
    <property type="entry name" value="UCP032146"/>
</dbReference>
<dbReference type="NCBIfam" id="NF002769">
    <property type="entry name" value="PRK02853.1"/>
    <property type="match status" value="1"/>
</dbReference>
<dbReference type="Pfam" id="PF06793">
    <property type="entry name" value="UPF0262"/>
    <property type="match status" value="1"/>
</dbReference>
<dbReference type="PIRSF" id="PIRSF032146">
    <property type="entry name" value="UCP032146"/>
    <property type="match status" value="1"/>
</dbReference>